<comment type="function">
    <text evidence="1">Probable S-adenosyl-L-methionine-dependent methyltransferase that acts as a component of the wybutosine biosynthesis pathway. Wybutosine is a hyper modified guanosine with a tricyclic base found at the 3'-position adjacent to the anticodon of eukaryotic phenylalanine tRNA. May methylate the carboxyl group of leucine residues to form alpha-leucine ester residues (By similarity).</text>
</comment>
<comment type="catalytic activity">
    <reaction>
        <text>7-[(3S)-3-amino-3-carboxypropyl]wyosine(37) in tRNA(Phe) + S-adenosyl-L-methionine = 7-[(3S)-(3-amino-3-methoxycarbonyl)propyl]wyosine(37) in tRNA(Phe) + S-adenosyl-L-homocysteine</text>
        <dbReference type="Rhea" id="RHEA:36903"/>
        <dbReference type="Rhea" id="RHEA-COMP:10379"/>
        <dbReference type="Rhea" id="RHEA-COMP:11844"/>
        <dbReference type="ChEBI" id="CHEBI:57856"/>
        <dbReference type="ChEBI" id="CHEBI:59789"/>
        <dbReference type="ChEBI" id="CHEBI:73543"/>
        <dbReference type="ChEBI" id="CHEBI:74275"/>
        <dbReference type="EC" id="2.1.1.290"/>
    </reaction>
</comment>
<comment type="catalytic activity">
    <reaction>
        <text>7-[(3S)-(3-amino-3-methoxycarbonyl)propyl]wyosine(37) in tRNA(Phe) + S-adenosyl-L-methionine + CO2 = wybutosine(37) in tRNA(Phe) + S-adenosyl-L-homocysteine + 2 H(+)</text>
        <dbReference type="Rhea" id="RHEA:37119"/>
        <dbReference type="Rhea" id="RHEA-COMP:11844"/>
        <dbReference type="Rhea" id="RHEA-COMP:11847"/>
        <dbReference type="ChEBI" id="CHEBI:15378"/>
        <dbReference type="ChEBI" id="CHEBI:16526"/>
        <dbReference type="ChEBI" id="CHEBI:57856"/>
        <dbReference type="ChEBI" id="CHEBI:59789"/>
        <dbReference type="ChEBI" id="CHEBI:73544"/>
        <dbReference type="ChEBI" id="CHEBI:74275"/>
        <dbReference type="EC" id="2.3.1.231"/>
    </reaction>
</comment>
<comment type="pathway">
    <text>tRNA modification; wybutosine-tRNA(Phe) biosynthesis.</text>
</comment>
<comment type="similarity">
    <text evidence="2">Belongs to the methyltransferase superfamily. LCMT family.</text>
</comment>
<proteinExistence type="inferred from homology"/>
<organism>
    <name type="scientific">Eremothecium gossypii (strain ATCC 10895 / CBS 109.51 / FGSC 9923 / NRRL Y-1056)</name>
    <name type="common">Yeast</name>
    <name type="synonym">Ashbya gossypii</name>
    <dbReference type="NCBI Taxonomy" id="284811"/>
    <lineage>
        <taxon>Eukaryota</taxon>
        <taxon>Fungi</taxon>
        <taxon>Dikarya</taxon>
        <taxon>Ascomycota</taxon>
        <taxon>Saccharomycotina</taxon>
        <taxon>Saccharomycetes</taxon>
        <taxon>Saccharomycetales</taxon>
        <taxon>Saccharomycetaceae</taxon>
        <taxon>Eremothecium</taxon>
    </lineage>
</organism>
<protein>
    <recommendedName>
        <fullName>tRNA wybutosine-synthesizing protein 4</fullName>
        <shortName>tRNA-yW synthesizing protein 4</shortName>
        <ecNumber>2.1.1.290</ecNumber>
        <ecNumber>2.3.1.231</ecNumber>
    </recommendedName>
    <alternativeName>
        <fullName>Leucine carboxyl methyltransferase 2</fullName>
    </alternativeName>
    <alternativeName>
        <fullName>tRNA(Phe) (7-(3-amino-3-(methoxycarbonyl)propyl)wyosine(37)-N)-methoxycarbonyltransferase</fullName>
    </alternativeName>
    <alternativeName>
        <fullName>tRNA(Phe) (7-(3-amino-3-carboxypropyl)wyosine(37)-O)-methyltransferase</fullName>
    </alternativeName>
</protein>
<name>TYW4_EREGS</name>
<evidence type="ECO:0000250" key="1"/>
<evidence type="ECO:0000305" key="2"/>
<gene>
    <name type="primary">PPM2</name>
    <name type="synonym">TYW4</name>
    <name type="ordered locus">ADL194W</name>
</gene>
<accession>Q75AW4</accession>
<keyword id="KW-0489">Methyltransferase</keyword>
<keyword id="KW-1185">Reference proteome</keyword>
<keyword id="KW-0949">S-adenosyl-L-methionine</keyword>
<keyword id="KW-0808">Transferase</keyword>
<keyword id="KW-0819">tRNA processing</keyword>
<reference key="1">
    <citation type="journal article" date="2004" name="Science">
        <title>The Ashbya gossypii genome as a tool for mapping the ancient Saccharomyces cerevisiae genome.</title>
        <authorList>
            <person name="Dietrich F.S."/>
            <person name="Voegeli S."/>
            <person name="Brachat S."/>
            <person name="Lerch A."/>
            <person name="Gates K."/>
            <person name="Steiner S."/>
            <person name="Mohr C."/>
            <person name="Poehlmann R."/>
            <person name="Luedi P."/>
            <person name="Choi S."/>
            <person name="Wing R.A."/>
            <person name="Flavier A."/>
            <person name="Gaffney T.D."/>
            <person name="Philippsen P."/>
        </authorList>
    </citation>
    <scope>NUCLEOTIDE SEQUENCE [LARGE SCALE GENOMIC DNA]</scope>
    <source>
        <strain>ATCC 10895 / CBS 109.51 / FGSC 9923 / NRRL Y-1056</strain>
    </source>
</reference>
<reference key="2">
    <citation type="journal article" date="2013" name="G3 (Bethesda)">
        <title>Genomes of Ashbya fungi isolated from insects reveal four mating-type loci, numerous translocations, lack of transposons, and distinct gene duplications.</title>
        <authorList>
            <person name="Dietrich F.S."/>
            <person name="Voegeli S."/>
            <person name="Kuo S."/>
            <person name="Philippsen P."/>
        </authorList>
    </citation>
    <scope>GENOME REANNOTATION</scope>
    <source>
        <strain>ATCC 10895 / CBS 109.51 / FGSC 9923 / NRRL Y-1056</strain>
    </source>
</reference>
<feature type="chain" id="PRO_0000226136" description="tRNA wybutosine-synthesizing protein 4">
    <location>
        <begin position="1"/>
        <end position="699"/>
    </location>
</feature>
<feature type="binding site" evidence="1">
    <location>
        <position position="94"/>
    </location>
    <ligand>
        <name>S-adenosyl-L-methionine</name>
        <dbReference type="ChEBI" id="CHEBI:59789"/>
    </ligand>
</feature>
<feature type="binding site" evidence="1">
    <location>
        <position position="120"/>
    </location>
    <ligand>
        <name>S-adenosyl-L-methionine</name>
        <dbReference type="ChEBI" id="CHEBI:59789"/>
    </ligand>
</feature>
<feature type="binding site" evidence="1">
    <location>
        <position position="151"/>
    </location>
    <ligand>
        <name>S-adenosyl-L-methionine</name>
        <dbReference type="ChEBI" id="CHEBI:59789"/>
    </ligand>
</feature>
<feature type="binding site" evidence="1">
    <location>
        <begin position="197"/>
        <end position="198"/>
    </location>
    <ligand>
        <name>S-adenosyl-L-methionine</name>
        <dbReference type="ChEBI" id="CHEBI:59789"/>
    </ligand>
</feature>
<feature type="binding site" evidence="1">
    <location>
        <position position="224"/>
    </location>
    <ligand>
        <name>S-adenosyl-L-methionine</name>
        <dbReference type="ChEBI" id="CHEBI:59789"/>
    </ligand>
</feature>
<sequence length="699" mass="77933">MSSMPVHIERPAELTAKQRLQLEKKVRSMKYADLAVQGTNTSSIASKRSVERLYADVLGTKVQGSNGQPREYFKYFVSKPLRRSPCINRGYWLRLMAIRTSLRCIAEGTGQRDILVVNLGCGYDPLPFQLLDHTDDAQSEFDDRMSFVDVDYPDLIAKKLEIVKNTPELQHILGGAAGDAAGPVVYRTAKYMAAACDLNDSAAFGALTESFHPRSDEVVVFIAEVSLAYMRPERADAIIEACGRIPNSHFILLEQLLPAGEHSPFSRTMLSHFKSNDSPLQSVSSYPTISEQEVRFKRLGFKNVNAGDMHQLWRSLDKELVSKVQAVEPFDELEEFYLFCHHYIIAHATNDLSFRFGPKYAFPQVPQSPSKSCSSNSPMELVTAVDTDLLQRKFGASVVVDSDTILFSFGCLHNKLENILVMGDHDGAFKISKGPAPPARMCHTFTKLDDRTIFLVGGRQSPTKPLGDAWLLKLRDGEWHWEMCAPLMYPRFRHNCVNVGKGKALIYGGETDGATFLIYDCESNTYYEPVYPRTFPRKVSAAMCYDFQSNRGYILGGALDNMEVDDTLCTFAFDARTNSIEILETSSHPLYQRYGAKSVVREAGHMLIVGGVSPHMLFNDTTSIIEVELTTNKVNCLQIPSSLWKNHAQLLVGFELQIMSDGTVLIFGGGAVCYGFGAAWNGILRLGRETIAAIPLRIL</sequence>
<dbReference type="EC" id="2.1.1.290"/>
<dbReference type="EC" id="2.3.1.231"/>
<dbReference type="EMBL" id="AE016817">
    <property type="protein sequence ID" value="AAS51726.1"/>
    <property type="molecule type" value="Genomic_DNA"/>
</dbReference>
<dbReference type="RefSeq" id="NP_983902.1">
    <property type="nucleotide sequence ID" value="NM_209255.1"/>
</dbReference>
<dbReference type="SMR" id="Q75AW4"/>
<dbReference type="FunCoup" id="Q75AW4">
    <property type="interactions" value="119"/>
</dbReference>
<dbReference type="STRING" id="284811.Q75AW4"/>
<dbReference type="EnsemblFungi" id="AAS51726">
    <property type="protein sequence ID" value="AAS51726"/>
    <property type="gene ID" value="AGOS_ADL194W"/>
</dbReference>
<dbReference type="GeneID" id="4620044"/>
<dbReference type="KEGG" id="ago:AGOS_ADL194W"/>
<dbReference type="eggNOG" id="KOG2918">
    <property type="taxonomic scope" value="Eukaryota"/>
</dbReference>
<dbReference type="HOGENOM" id="CLU_002761_0_0_1"/>
<dbReference type="InParanoid" id="Q75AW4"/>
<dbReference type="OMA" id="FCILEQF"/>
<dbReference type="OrthoDB" id="47172at2759"/>
<dbReference type="UniPathway" id="UPA00375"/>
<dbReference type="Proteomes" id="UP000000591">
    <property type="component" value="Chromosome IV"/>
</dbReference>
<dbReference type="GO" id="GO:0008175">
    <property type="term" value="F:tRNA methyltransferase activity"/>
    <property type="evidence" value="ECO:0000318"/>
    <property type="project" value="GO_Central"/>
</dbReference>
<dbReference type="GO" id="GO:0030488">
    <property type="term" value="P:tRNA methylation"/>
    <property type="evidence" value="ECO:0000318"/>
    <property type="project" value="GO_Central"/>
</dbReference>
<dbReference type="GO" id="GO:0031591">
    <property type="term" value="P:wybutosine biosynthetic process"/>
    <property type="evidence" value="ECO:0000318"/>
    <property type="project" value="GO_Central"/>
</dbReference>
<dbReference type="Gene3D" id="2.120.10.80">
    <property type="entry name" value="Kelch-type beta propeller"/>
    <property type="match status" value="1"/>
</dbReference>
<dbReference type="Gene3D" id="3.40.50.150">
    <property type="entry name" value="Vaccinia Virus protein VP39"/>
    <property type="match status" value="1"/>
</dbReference>
<dbReference type="InterPro" id="IPR011043">
    <property type="entry name" value="Gal_Oxase/kelch_b-propeller"/>
</dbReference>
<dbReference type="InterPro" id="IPR015915">
    <property type="entry name" value="Kelch-typ_b-propeller"/>
</dbReference>
<dbReference type="InterPro" id="IPR007213">
    <property type="entry name" value="Ppm1/Ppm2/Tcmp"/>
</dbReference>
<dbReference type="InterPro" id="IPR029063">
    <property type="entry name" value="SAM-dependent_MTases_sf"/>
</dbReference>
<dbReference type="PANTHER" id="PTHR46529">
    <property type="entry name" value="TRNA WYBUTOSINE-SYNTHESIZING PROTEIN 4"/>
    <property type="match status" value="1"/>
</dbReference>
<dbReference type="PANTHER" id="PTHR46529:SF1">
    <property type="entry name" value="TRNA WYBUTOSINE-SYNTHESIZING PROTEIN 4"/>
    <property type="match status" value="1"/>
</dbReference>
<dbReference type="Pfam" id="PF13418">
    <property type="entry name" value="Kelch_4"/>
    <property type="match status" value="1"/>
</dbReference>
<dbReference type="Pfam" id="PF04072">
    <property type="entry name" value="LCM"/>
    <property type="match status" value="1"/>
</dbReference>
<dbReference type="SUPFAM" id="SSF50965">
    <property type="entry name" value="Galactose oxidase, central domain"/>
    <property type="match status" value="1"/>
</dbReference>
<dbReference type="SUPFAM" id="SSF53335">
    <property type="entry name" value="S-adenosyl-L-methionine-dependent methyltransferases"/>
    <property type="match status" value="1"/>
</dbReference>